<name>REQU_MOUSE</name>
<dbReference type="EMBL" id="U43921">
    <property type="protein sequence ID" value="AAC52783.1"/>
    <property type="molecule type" value="mRNA"/>
</dbReference>
<dbReference type="EMBL" id="AF108134">
    <property type="protein sequence ID" value="AAF21306.1"/>
    <property type="molecule type" value="Genomic_DNA"/>
</dbReference>
<dbReference type="EMBL" id="AK004812">
    <property type="protein sequence ID" value="BAB23583.1"/>
    <property type="molecule type" value="mRNA"/>
</dbReference>
<dbReference type="EMBL" id="AK138047">
    <property type="protein sequence ID" value="BAE23543.1"/>
    <property type="molecule type" value="mRNA"/>
</dbReference>
<dbReference type="EMBL" id="AK144106">
    <property type="protein sequence ID" value="BAE25702.1"/>
    <property type="molecule type" value="mRNA"/>
</dbReference>
<dbReference type="EMBL" id="AK144848">
    <property type="protein sequence ID" value="BAE26098.1"/>
    <property type="molecule type" value="mRNA"/>
</dbReference>
<dbReference type="EMBL" id="AK144954">
    <property type="protein sequence ID" value="BAE26153.1"/>
    <property type="molecule type" value="mRNA"/>
</dbReference>
<dbReference type="EMBL" id="BC007188">
    <property type="protein sequence ID" value="AAH07188.1"/>
    <property type="status" value="ALT_INIT"/>
    <property type="molecule type" value="mRNA"/>
</dbReference>
<dbReference type="EMBL" id="BC012709">
    <property type="protein sequence ID" value="AAH12709.1"/>
    <property type="molecule type" value="mRNA"/>
</dbReference>
<dbReference type="EMBL" id="U10435">
    <property type="protein sequence ID" value="AAA64637.1"/>
    <property type="status" value="ALT_INIT"/>
    <property type="molecule type" value="mRNA"/>
</dbReference>
<dbReference type="CCDS" id="CCDS37892.1"/>
<dbReference type="RefSeq" id="NP_001278007.1">
    <property type="nucleotide sequence ID" value="NM_001291078.1"/>
</dbReference>
<dbReference type="RefSeq" id="NP_035392.1">
    <property type="nucleotide sequence ID" value="NM_011262.5"/>
</dbReference>
<dbReference type="SMR" id="Q61103"/>
<dbReference type="BioGRID" id="202862">
    <property type="interactions" value="10"/>
</dbReference>
<dbReference type="ComplexPortal" id="CPX-1251">
    <property type="entry name" value="Embryonic stem cell-specific SWI/SNF ATP-dependent chromatin remodeling complex"/>
</dbReference>
<dbReference type="DIP" id="DIP-59247N"/>
<dbReference type="FunCoup" id="Q61103">
    <property type="interactions" value="4219"/>
</dbReference>
<dbReference type="IntAct" id="Q61103">
    <property type="interactions" value="8"/>
</dbReference>
<dbReference type="MINT" id="Q61103"/>
<dbReference type="STRING" id="10090.ENSMUSP00000113465"/>
<dbReference type="iPTMnet" id="Q61103"/>
<dbReference type="PhosphoSitePlus" id="Q61103"/>
<dbReference type="SwissPalm" id="Q61103"/>
<dbReference type="jPOST" id="Q61103"/>
<dbReference type="PaxDb" id="10090-ENSMUSP00000120125"/>
<dbReference type="PeptideAtlas" id="Q61103"/>
<dbReference type="ProteomicsDB" id="253212"/>
<dbReference type="Pumba" id="Q61103"/>
<dbReference type="Antibodypedia" id="15846">
    <property type="antibodies" value="333 antibodies from 38 providers"/>
</dbReference>
<dbReference type="DNASU" id="19708"/>
<dbReference type="Ensembl" id="ENSMUST00000136983.8">
    <property type="protein sequence ID" value="ENSMUSP00000120125.2"/>
    <property type="gene ID" value="ENSMUSG00000024826.16"/>
</dbReference>
<dbReference type="GeneID" id="19708"/>
<dbReference type="KEGG" id="mmu:19708"/>
<dbReference type="UCSC" id="uc008gfw.3">
    <property type="organism name" value="mouse"/>
</dbReference>
<dbReference type="AGR" id="MGI:109529"/>
<dbReference type="CTD" id="5977"/>
<dbReference type="MGI" id="MGI:109529">
    <property type="gene designation" value="Dpf2"/>
</dbReference>
<dbReference type="VEuPathDB" id="HostDB:ENSMUSG00000024826"/>
<dbReference type="eggNOG" id="KOG1244">
    <property type="taxonomic scope" value="Eukaryota"/>
</dbReference>
<dbReference type="GeneTree" id="ENSGT00940000155070"/>
<dbReference type="HOGENOM" id="CLU_038980_0_1_1"/>
<dbReference type="InParanoid" id="Q61103"/>
<dbReference type="OrthoDB" id="1903104at2759"/>
<dbReference type="PhylomeDB" id="Q61103"/>
<dbReference type="TreeFam" id="TF318971"/>
<dbReference type="BioGRID-ORCS" id="19708">
    <property type="hits" value="12 hits in 85 CRISPR screens"/>
</dbReference>
<dbReference type="ChiTaRS" id="Dpf2">
    <property type="organism name" value="mouse"/>
</dbReference>
<dbReference type="PRO" id="PR:Q61103"/>
<dbReference type="Proteomes" id="UP000000589">
    <property type="component" value="Chromosome 19"/>
</dbReference>
<dbReference type="RNAct" id="Q61103">
    <property type="molecule type" value="protein"/>
</dbReference>
<dbReference type="Bgee" id="ENSMUSG00000024826">
    <property type="expression patterns" value="Expressed in embryonic post-anal tail and 290 other cell types or tissues"/>
</dbReference>
<dbReference type="ExpressionAtlas" id="Q61103">
    <property type="expression patterns" value="baseline and differential"/>
</dbReference>
<dbReference type="GO" id="GO:0005813">
    <property type="term" value="C:centrosome"/>
    <property type="evidence" value="ECO:0007669"/>
    <property type="project" value="Ensembl"/>
</dbReference>
<dbReference type="GO" id="GO:0000785">
    <property type="term" value="C:chromatin"/>
    <property type="evidence" value="ECO:0000303"/>
    <property type="project" value="ComplexPortal"/>
</dbReference>
<dbReference type="GO" id="GO:0005737">
    <property type="term" value="C:cytoplasm"/>
    <property type="evidence" value="ECO:0000314"/>
    <property type="project" value="MGI"/>
</dbReference>
<dbReference type="GO" id="GO:0005829">
    <property type="term" value="C:cytosol"/>
    <property type="evidence" value="ECO:0007669"/>
    <property type="project" value="Ensembl"/>
</dbReference>
<dbReference type="GO" id="GO:0005654">
    <property type="term" value="C:nucleoplasm"/>
    <property type="evidence" value="ECO:0000304"/>
    <property type="project" value="Reactome"/>
</dbReference>
<dbReference type="GO" id="GO:0005634">
    <property type="term" value="C:nucleus"/>
    <property type="evidence" value="ECO:0000314"/>
    <property type="project" value="MGI"/>
</dbReference>
<dbReference type="GO" id="GO:0016514">
    <property type="term" value="C:SWI/SNF complex"/>
    <property type="evidence" value="ECO:0000303"/>
    <property type="project" value="ComplexPortal"/>
</dbReference>
<dbReference type="GO" id="GO:0140015">
    <property type="term" value="F:histone H3K14ac reader activity"/>
    <property type="evidence" value="ECO:0007669"/>
    <property type="project" value="Ensembl"/>
</dbReference>
<dbReference type="GO" id="GO:0140046">
    <property type="term" value="F:histone H4K16ac reader activity"/>
    <property type="evidence" value="ECO:0007669"/>
    <property type="project" value="Ensembl"/>
</dbReference>
<dbReference type="GO" id="GO:0008270">
    <property type="term" value="F:zinc ion binding"/>
    <property type="evidence" value="ECO:0007669"/>
    <property type="project" value="UniProtKB-KW"/>
</dbReference>
<dbReference type="GO" id="GO:0006915">
    <property type="term" value="P:apoptotic process"/>
    <property type="evidence" value="ECO:0007669"/>
    <property type="project" value="UniProtKB-KW"/>
</dbReference>
<dbReference type="GO" id="GO:0006338">
    <property type="term" value="P:chromatin remodeling"/>
    <property type="evidence" value="ECO:0000303"/>
    <property type="project" value="ComplexPortal"/>
</dbReference>
<dbReference type="GO" id="GO:1905454">
    <property type="term" value="P:negative regulation of myeloid progenitor cell differentiation"/>
    <property type="evidence" value="ECO:0000250"/>
    <property type="project" value="UniProtKB"/>
</dbReference>
<dbReference type="GO" id="GO:2000781">
    <property type="term" value="P:positive regulation of double-strand break repair"/>
    <property type="evidence" value="ECO:0000303"/>
    <property type="project" value="ComplexPortal"/>
</dbReference>
<dbReference type="GO" id="GO:1902459">
    <property type="term" value="P:positive regulation of stem cell population maintenance"/>
    <property type="evidence" value="ECO:0000303"/>
    <property type="project" value="ComplexPortal"/>
</dbReference>
<dbReference type="GO" id="GO:0070316">
    <property type="term" value="P:regulation of G0 to G1 transition"/>
    <property type="evidence" value="ECO:0000303"/>
    <property type="project" value="ComplexPortal"/>
</dbReference>
<dbReference type="GO" id="GO:2000045">
    <property type="term" value="P:regulation of G1/S transition of mitotic cell cycle"/>
    <property type="evidence" value="ECO:0000303"/>
    <property type="project" value="ComplexPortal"/>
</dbReference>
<dbReference type="GO" id="GO:0030071">
    <property type="term" value="P:regulation of mitotic metaphase/anaphase transition"/>
    <property type="evidence" value="ECO:0000303"/>
    <property type="project" value="ComplexPortal"/>
</dbReference>
<dbReference type="GO" id="GO:2000819">
    <property type="term" value="P:regulation of nucleotide-excision repair"/>
    <property type="evidence" value="ECO:0000303"/>
    <property type="project" value="ComplexPortal"/>
</dbReference>
<dbReference type="GO" id="GO:0006357">
    <property type="term" value="P:regulation of transcription by RNA polymerase II"/>
    <property type="evidence" value="ECO:0000303"/>
    <property type="project" value="ComplexPortal"/>
</dbReference>
<dbReference type="CDD" id="cd15691">
    <property type="entry name" value="PHD1_DPF2_like"/>
    <property type="match status" value="1"/>
</dbReference>
<dbReference type="CDD" id="cd15530">
    <property type="entry name" value="PHD2_d4"/>
    <property type="match status" value="1"/>
</dbReference>
<dbReference type="FunFam" id="3.30.160.60:FF:003699">
    <property type="entry name" value="D4, zinc and double PHD fingers family 1"/>
    <property type="match status" value="1"/>
</dbReference>
<dbReference type="FunFam" id="3.30.40.10:FF:000005">
    <property type="entry name" value="zinc finger protein isoform X1"/>
    <property type="match status" value="1"/>
</dbReference>
<dbReference type="Gene3D" id="3.30.160.60">
    <property type="entry name" value="Classic Zinc Finger"/>
    <property type="match status" value="1"/>
</dbReference>
<dbReference type="Gene3D" id="3.30.40.10">
    <property type="entry name" value="Zinc/RING finger domain, C3HC4 (zinc finger)"/>
    <property type="match status" value="1"/>
</dbReference>
<dbReference type="InterPro" id="IPR025750">
    <property type="entry name" value="DPF1-3_N"/>
</dbReference>
<dbReference type="InterPro" id="IPR036236">
    <property type="entry name" value="Znf_C2H2_sf"/>
</dbReference>
<dbReference type="InterPro" id="IPR013087">
    <property type="entry name" value="Znf_C2H2_type"/>
</dbReference>
<dbReference type="InterPro" id="IPR011011">
    <property type="entry name" value="Znf_FYVE_PHD"/>
</dbReference>
<dbReference type="InterPro" id="IPR001965">
    <property type="entry name" value="Znf_PHD"/>
</dbReference>
<dbReference type="InterPro" id="IPR019787">
    <property type="entry name" value="Znf_PHD-finger"/>
</dbReference>
<dbReference type="InterPro" id="IPR013083">
    <property type="entry name" value="Znf_RING/FYVE/PHD"/>
</dbReference>
<dbReference type="PANTHER" id="PTHR45888">
    <property type="entry name" value="HL01030P-RELATED"/>
    <property type="match status" value="1"/>
</dbReference>
<dbReference type="PANTHER" id="PTHR45888:SF7">
    <property type="entry name" value="ZINC FINGER PROTEIN UBI-D4"/>
    <property type="match status" value="1"/>
</dbReference>
<dbReference type="Pfam" id="PF14051">
    <property type="entry name" value="DPF1-3_N"/>
    <property type="match status" value="1"/>
</dbReference>
<dbReference type="Pfam" id="PF00628">
    <property type="entry name" value="PHD"/>
    <property type="match status" value="2"/>
</dbReference>
<dbReference type="SMART" id="SM00249">
    <property type="entry name" value="PHD"/>
    <property type="match status" value="2"/>
</dbReference>
<dbReference type="SMART" id="SM00355">
    <property type="entry name" value="ZnF_C2H2"/>
    <property type="match status" value="1"/>
</dbReference>
<dbReference type="SUPFAM" id="SSF57667">
    <property type="entry name" value="beta-beta-alpha zinc fingers"/>
    <property type="match status" value="1"/>
</dbReference>
<dbReference type="SUPFAM" id="SSF57903">
    <property type="entry name" value="FYVE/PHD zinc finger"/>
    <property type="match status" value="2"/>
</dbReference>
<dbReference type="PROSITE" id="PS01359">
    <property type="entry name" value="ZF_PHD_1"/>
    <property type="match status" value="1"/>
</dbReference>
<dbReference type="PROSITE" id="PS50016">
    <property type="entry name" value="ZF_PHD_2"/>
    <property type="match status" value="2"/>
</dbReference>
<dbReference type="PROSITE" id="PS00028">
    <property type="entry name" value="ZINC_FINGER_C2H2_1"/>
    <property type="match status" value="1"/>
</dbReference>
<dbReference type="PROSITE" id="PS50157">
    <property type="entry name" value="ZINC_FINGER_C2H2_2"/>
    <property type="match status" value="1"/>
</dbReference>
<feature type="initiator methionine" description="Removed" evidence="1">
    <location>
        <position position="1"/>
    </location>
</feature>
<feature type="chain" id="PRO_0000168150" description="Zinc finger protein ubi-d4">
    <location>
        <begin position="2"/>
        <end position="391"/>
    </location>
</feature>
<feature type="zinc finger region" description="C2H2-type" evidence="2">
    <location>
        <begin position="209"/>
        <end position="232"/>
    </location>
</feature>
<feature type="zinc finger region" description="PHD-type 1" evidence="3">
    <location>
        <begin position="270"/>
        <end position="330"/>
    </location>
</feature>
<feature type="zinc finger region" description="PHD-type 2" evidence="3">
    <location>
        <begin position="327"/>
        <end position="377"/>
    </location>
</feature>
<feature type="region of interest" description="Disordered" evidence="4">
    <location>
        <begin position="79"/>
        <end position="147"/>
    </location>
</feature>
<feature type="region of interest" description="Disordered" evidence="4">
    <location>
        <begin position="165"/>
        <end position="199"/>
    </location>
</feature>
<feature type="region of interest" description="Disordered" evidence="4">
    <location>
        <begin position="233"/>
        <end position="266"/>
    </location>
</feature>
<feature type="compositionally biased region" description="Basic and acidic residues" evidence="4">
    <location>
        <begin position="100"/>
        <end position="110"/>
    </location>
</feature>
<feature type="compositionally biased region" description="Basic and acidic residues" evidence="4">
    <location>
        <begin position="126"/>
        <end position="140"/>
    </location>
</feature>
<feature type="compositionally biased region" description="Acidic residues" evidence="4">
    <location>
        <begin position="165"/>
        <end position="174"/>
    </location>
</feature>
<feature type="compositionally biased region" description="Basic and acidic residues" evidence="4">
    <location>
        <begin position="253"/>
        <end position="263"/>
    </location>
</feature>
<feature type="modified residue" description="N-acetylalanine" evidence="1">
    <location>
        <position position="2"/>
    </location>
</feature>
<feature type="modified residue" description="Phosphoserine" evidence="9 10">
    <location>
        <position position="142"/>
    </location>
</feature>
<feature type="modified residue" description="Phosphotyrosine" evidence="1">
    <location>
        <position position="172"/>
    </location>
</feature>
<feature type="modified residue" description="Phosphothreonine" evidence="10">
    <location>
        <position position="176"/>
    </location>
</feature>
<feature type="modified residue" description="Phosphoserine" evidence="1">
    <location>
        <position position="200"/>
    </location>
</feature>
<feature type="modified residue" description="Phosphoserine" evidence="1">
    <location>
        <position position="244"/>
    </location>
</feature>
<feature type="modified residue" description="Phosphoserine" evidence="1">
    <location>
        <position position="280"/>
    </location>
</feature>
<feature type="cross-link" description="Glycyl lysine isopeptide (Lys-Gly) (interchain with G-Cter in SUMO2)" evidence="1">
    <location>
        <position position="10"/>
    </location>
</feature>
<feature type="cross-link" description="Glycyl lysine isopeptide (Lys-Gly) (interchain with G-Cter in SUMO2)" evidence="1">
    <location>
        <position position="99"/>
    </location>
</feature>
<feature type="cross-link" description="Glycyl lysine isopeptide (Lys-Gly) (interchain with G-Cter in SUMO2)" evidence="1">
    <location>
        <position position="107"/>
    </location>
</feature>
<feature type="cross-link" description="Glycyl lysine isopeptide (Lys-Gly) (interchain with G-Cter in SUMO2)" evidence="1">
    <location>
        <position position="108"/>
    </location>
</feature>
<feature type="cross-link" description="Glycyl lysine isopeptide (Lys-Gly) (interchain with G-Cter in SUMO2)" evidence="1">
    <location>
        <position position="178"/>
    </location>
</feature>
<feature type="cross-link" description="Glycyl lysine isopeptide (Lys-Gly) (interchain with G-Cter in SUMO2)" evidence="1">
    <location>
        <position position="196"/>
    </location>
</feature>
<feature type="cross-link" description="Glycyl lysine isopeptide (Lys-Gly) (interchain with G-Cter in SUMO2)" evidence="1">
    <location>
        <position position="281"/>
    </location>
</feature>
<feature type="sequence conflict" description="In Ref. 4; AAA64637." evidence="8" ref="4">
    <original>T</original>
    <variation>R</variation>
    <location>
        <position position="176"/>
    </location>
</feature>
<feature type="sequence conflict" description="In Ref. 3; AAH07188." evidence="8" ref="3">
    <location>
        <begin position="187"/>
        <end position="188"/>
    </location>
</feature>
<accession>Q61103</accession>
<accession>Q3UNP5</accession>
<accession>Q60663</accession>
<accession>Q9QYA3</accession>
<protein>
    <recommendedName>
        <fullName>Zinc finger protein ubi-d4</fullName>
    </recommendedName>
    <alternativeName>
        <fullName>Apoptosis response zinc finger protein</fullName>
    </alternativeName>
    <alternativeName>
        <fullName>BRG1-associated factor 45D</fullName>
        <shortName>BAF45D</shortName>
    </alternativeName>
    <alternativeName>
        <fullName>D4, zinc and double PHD fingers family 2</fullName>
    </alternativeName>
    <alternativeName>
        <fullName>Protein requiem</fullName>
    </alternativeName>
</protein>
<gene>
    <name type="primary">Dpf2</name>
    <name type="synonym">Baf45d</name>
    <name type="synonym">Req</name>
    <name type="synonym">Ubid4</name>
</gene>
<organism>
    <name type="scientific">Mus musculus</name>
    <name type="common">Mouse</name>
    <dbReference type="NCBI Taxonomy" id="10090"/>
    <lineage>
        <taxon>Eukaryota</taxon>
        <taxon>Metazoa</taxon>
        <taxon>Chordata</taxon>
        <taxon>Craniata</taxon>
        <taxon>Vertebrata</taxon>
        <taxon>Euteleostomi</taxon>
        <taxon>Mammalia</taxon>
        <taxon>Eutheria</taxon>
        <taxon>Euarchontoglires</taxon>
        <taxon>Glires</taxon>
        <taxon>Rodentia</taxon>
        <taxon>Myomorpha</taxon>
        <taxon>Muroidea</taxon>
        <taxon>Muridae</taxon>
        <taxon>Murinae</taxon>
        <taxon>Mus</taxon>
        <taxon>Mus</taxon>
    </lineage>
</organism>
<comment type="function">
    <text evidence="1 6">Plays an active role in transcriptional regulation by binding modified histones H3 and H4. Is a negative regulator of myeloid differentiation of hematopoietic progenitor cells (By similarity). Might also have a role in the development and maturation of lymphoid cells (PubMed:7961935). Involved in the regulation of non-canonical NF-kappa-B pathway (By similarity).</text>
</comment>
<comment type="subunit">
    <text evidence="1">Interacts with the nucleosomes, in particular nucleosomes bearing histone H3 crotonylated at 'Lys-14' (H3K14cr) for which DPF2 has high affinity. Also interacts (via PHD-type zinc finger domains) with histone H3 butyrylated at 'Lys-14' (H3K14bu), histone H3 propionylated at 'Lys-14' (H3K14pr), and histone H3 acetylated at 'Lys-14' (H3K14ac). Interacts with histone H3 acetylated at 'Lys-9' (H3K9ac), histone H3 di-methylated at 'Lys-9' (H3K9me2), and histone H3 tri-methylated at 'Lys-9' (H3K9me3). Interacts with histone H4 acetylated at 'Lys-12' (H4K12ac). Interacts with histone H4 acetylated at 'Lys-16' (H4K16ac). Interacts with SWI/SNF complex components. Interacts with SMARCA2, SMARCA4, SMARCB1 and SMARCD1. Interacts with SMARCC1, SMARCC2 and ACTL6A. Interacts with RUNX1.</text>
</comment>
<comment type="subcellular location">
    <subcellularLocation>
        <location evidence="1">Nucleus</location>
    </subcellularLocation>
    <subcellularLocation>
        <location evidence="1">Cytoplasm</location>
    </subcellularLocation>
</comment>
<comment type="tissue specificity">
    <text evidence="7">In embryo, highest levels are seen in brain, eyes, thymus and olfactory epithelium in nose, whereas several other tissues, including the musculoskeletal system, show moderate expression. In adult, higher expression in testis, medium in thymus and spleen, lower in certain parts of the brain as the hippocampus. No expression in adult heart, lung, liver, duodenum and kidney.</text>
</comment>
<comment type="developmental stage">
    <text evidence="5">Already detected at embryonic day 8.5. Expressed ubiquitously throughout the developing spinal cord, brain and other embryonic tissues at 10.5 dpc-16.5 dpc.</text>
</comment>
<comment type="similarity">
    <text evidence="8">Belongs to the requiem/DPF family.</text>
</comment>
<comment type="sequence caution" evidence="8">
    <conflict type="erroneous initiation">
        <sequence resource="EMBL-CDS" id="AAA64637"/>
    </conflict>
</comment>
<comment type="sequence caution" evidence="8">
    <conflict type="erroneous initiation">
        <sequence resource="EMBL-CDS" id="AAH07188"/>
    </conflict>
</comment>
<keyword id="KW-0007">Acetylation</keyword>
<keyword id="KW-0053">Apoptosis</keyword>
<keyword id="KW-0156">Chromatin regulator</keyword>
<keyword id="KW-0963">Cytoplasm</keyword>
<keyword id="KW-1017">Isopeptide bond</keyword>
<keyword id="KW-0479">Metal-binding</keyword>
<keyword id="KW-0539">Nucleus</keyword>
<keyword id="KW-0597">Phosphoprotein</keyword>
<keyword id="KW-1185">Reference proteome</keyword>
<keyword id="KW-0677">Repeat</keyword>
<keyword id="KW-0804">Transcription</keyword>
<keyword id="KW-0805">Transcription regulation</keyword>
<keyword id="KW-0832">Ubl conjugation</keyword>
<keyword id="KW-0862">Zinc</keyword>
<keyword id="KW-0863">Zinc-finger</keyword>
<proteinExistence type="evidence at protein level"/>
<evidence type="ECO:0000250" key="1">
    <source>
        <dbReference type="UniProtKB" id="Q92785"/>
    </source>
</evidence>
<evidence type="ECO:0000255" key="2">
    <source>
        <dbReference type="PROSITE-ProRule" id="PRU00042"/>
    </source>
</evidence>
<evidence type="ECO:0000255" key="3">
    <source>
        <dbReference type="PROSITE-ProRule" id="PRU00146"/>
    </source>
</evidence>
<evidence type="ECO:0000256" key="4">
    <source>
        <dbReference type="SAM" id="MobiDB-lite"/>
    </source>
</evidence>
<evidence type="ECO:0000269" key="5">
    <source>
    </source>
</evidence>
<evidence type="ECO:0000269" key="6">
    <source>
    </source>
</evidence>
<evidence type="ECO:0000269" key="7">
    <source>
    </source>
</evidence>
<evidence type="ECO:0000305" key="8"/>
<evidence type="ECO:0007744" key="9">
    <source>
    </source>
</evidence>
<evidence type="ECO:0007744" key="10">
    <source>
    </source>
</evidence>
<sequence>MAAVVENVVKLLGEQYYKDAMEQCHNYNARLCAERSVRLPFLDSQTGVAQSNCYIWMEKRHRGPGLASGQLYSYPARRWRKKRRAHPPEDPRLSFPSIKPDTDQTLKKEGLISQDGSSLEALLRTDPLEKRGAPDPRVDDDSLGEFPVSNSRARKRIIEPDDFLDDLDDEDYEEDTPKRRGKGKSKSKGVSSARKKLDASILEDRDKPYACDICGKRYKNRPGLSYHYAHSHLAEEEGEDKEDSRPPTPVSQRSEEQKSKKGPDGLALPNNYCDFCLGDSKINKKTGQPEELVSCSDCGRSGHPSCLQFTPVMMAAVKTYRWQCIECKCCNLCGTSENDDQLLFCDDCDRGYHMYCLTPSMSEPPEGSWSCHLCLDLLKEKASIYQNQNSS</sequence>
<reference key="1">
    <citation type="journal article" date="2000" name="Mamm. Genome">
        <title>Structure and expression of two members of the d4 gene family in mouse.</title>
        <authorList>
            <person name="Mertsalov I.B."/>
            <person name="Kulikova D.A."/>
            <person name="Alimova-Kost M.V."/>
            <person name="Ninkina N.N."/>
            <person name="Korochkin L.I."/>
            <person name="Buchman V.L."/>
        </authorList>
    </citation>
    <scope>NUCLEOTIDE SEQUENCE [GENOMIC DNA / MRNA]</scope>
    <source>
        <strain>CD-1</strain>
    </source>
</reference>
<reference key="2">
    <citation type="journal article" date="2005" name="Science">
        <title>The transcriptional landscape of the mammalian genome.</title>
        <authorList>
            <person name="Carninci P."/>
            <person name="Kasukawa T."/>
            <person name="Katayama S."/>
            <person name="Gough J."/>
            <person name="Frith M.C."/>
            <person name="Maeda N."/>
            <person name="Oyama R."/>
            <person name="Ravasi T."/>
            <person name="Lenhard B."/>
            <person name="Wells C."/>
            <person name="Kodzius R."/>
            <person name="Shimokawa K."/>
            <person name="Bajic V.B."/>
            <person name="Brenner S.E."/>
            <person name="Batalov S."/>
            <person name="Forrest A.R."/>
            <person name="Zavolan M."/>
            <person name="Davis M.J."/>
            <person name="Wilming L.G."/>
            <person name="Aidinis V."/>
            <person name="Allen J.E."/>
            <person name="Ambesi-Impiombato A."/>
            <person name="Apweiler R."/>
            <person name="Aturaliya R.N."/>
            <person name="Bailey T.L."/>
            <person name="Bansal M."/>
            <person name="Baxter L."/>
            <person name="Beisel K.W."/>
            <person name="Bersano T."/>
            <person name="Bono H."/>
            <person name="Chalk A.M."/>
            <person name="Chiu K.P."/>
            <person name="Choudhary V."/>
            <person name="Christoffels A."/>
            <person name="Clutterbuck D.R."/>
            <person name="Crowe M.L."/>
            <person name="Dalla E."/>
            <person name="Dalrymple B.P."/>
            <person name="de Bono B."/>
            <person name="Della Gatta G."/>
            <person name="di Bernardo D."/>
            <person name="Down T."/>
            <person name="Engstrom P."/>
            <person name="Fagiolini M."/>
            <person name="Faulkner G."/>
            <person name="Fletcher C.F."/>
            <person name="Fukushima T."/>
            <person name="Furuno M."/>
            <person name="Futaki S."/>
            <person name="Gariboldi M."/>
            <person name="Georgii-Hemming P."/>
            <person name="Gingeras T.R."/>
            <person name="Gojobori T."/>
            <person name="Green R.E."/>
            <person name="Gustincich S."/>
            <person name="Harbers M."/>
            <person name="Hayashi Y."/>
            <person name="Hensch T.K."/>
            <person name="Hirokawa N."/>
            <person name="Hill D."/>
            <person name="Huminiecki L."/>
            <person name="Iacono M."/>
            <person name="Ikeo K."/>
            <person name="Iwama A."/>
            <person name="Ishikawa T."/>
            <person name="Jakt M."/>
            <person name="Kanapin A."/>
            <person name="Katoh M."/>
            <person name="Kawasawa Y."/>
            <person name="Kelso J."/>
            <person name="Kitamura H."/>
            <person name="Kitano H."/>
            <person name="Kollias G."/>
            <person name="Krishnan S.P."/>
            <person name="Kruger A."/>
            <person name="Kummerfeld S.K."/>
            <person name="Kurochkin I.V."/>
            <person name="Lareau L.F."/>
            <person name="Lazarevic D."/>
            <person name="Lipovich L."/>
            <person name="Liu J."/>
            <person name="Liuni S."/>
            <person name="McWilliam S."/>
            <person name="Madan Babu M."/>
            <person name="Madera M."/>
            <person name="Marchionni L."/>
            <person name="Matsuda H."/>
            <person name="Matsuzawa S."/>
            <person name="Miki H."/>
            <person name="Mignone F."/>
            <person name="Miyake S."/>
            <person name="Morris K."/>
            <person name="Mottagui-Tabar S."/>
            <person name="Mulder N."/>
            <person name="Nakano N."/>
            <person name="Nakauchi H."/>
            <person name="Ng P."/>
            <person name="Nilsson R."/>
            <person name="Nishiguchi S."/>
            <person name="Nishikawa S."/>
            <person name="Nori F."/>
            <person name="Ohara O."/>
            <person name="Okazaki Y."/>
            <person name="Orlando V."/>
            <person name="Pang K.C."/>
            <person name="Pavan W.J."/>
            <person name="Pavesi G."/>
            <person name="Pesole G."/>
            <person name="Petrovsky N."/>
            <person name="Piazza S."/>
            <person name="Reed J."/>
            <person name="Reid J.F."/>
            <person name="Ring B.Z."/>
            <person name="Ringwald M."/>
            <person name="Rost B."/>
            <person name="Ruan Y."/>
            <person name="Salzberg S.L."/>
            <person name="Sandelin A."/>
            <person name="Schneider C."/>
            <person name="Schoenbach C."/>
            <person name="Sekiguchi K."/>
            <person name="Semple C.A."/>
            <person name="Seno S."/>
            <person name="Sessa L."/>
            <person name="Sheng Y."/>
            <person name="Shibata Y."/>
            <person name="Shimada H."/>
            <person name="Shimada K."/>
            <person name="Silva D."/>
            <person name="Sinclair B."/>
            <person name="Sperling S."/>
            <person name="Stupka E."/>
            <person name="Sugiura K."/>
            <person name="Sultana R."/>
            <person name="Takenaka Y."/>
            <person name="Taki K."/>
            <person name="Tammoja K."/>
            <person name="Tan S.L."/>
            <person name="Tang S."/>
            <person name="Taylor M.S."/>
            <person name="Tegner J."/>
            <person name="Teichmann S.A."/>
            <person name="Ueda H.R."/>
            <person name="van Nimwegen E."/>
            <person name="Verardo R."/>
            <person name="Wei C.L."/>
            <person name="Yagi K."/>
            <person name="Yamanishi H."/>
            <person name="Zabarovsky E."/>
            <person name="Zhu S."/>
            <person name="Zimmer A."/>
            <person name="Hide W."/>
            <person name="Bult C."/>
            <person name="Grimmond S.M."/>
            <person name="Teasdale R.D."/>
            <person name="Liu E.T."/>
            <person name="Brusic V."/>
            <person name="Quackenbush J."/>
            <person name="Wahlestedt C."/>
            <person name="Mattick J.S."/>
            <person name="Hume D.A."/>
            <person name="Kai C."/>
            <person name="Sasaki D."/>
            <person name="Tomaru Y."/>
            <person name="Fukuda S."/>
            <person name="Kanamori-Katayama M."/>
            <person name="Suzuki M."/>
            <person name="Aoki J."/>
            <person name="Arakawa T."/>
            <person name="Iida J."/>
            <person name="Imamura K."/>
            <person name="Itoh M."/>
            <person name="Kato T."/>
            <person name="Kawaji H."/>
            <person name="Kawagashira N."/>
            <person name="Kawashima T."/>
            <person name="Kojima M."/>
            <person name="Kondo S."/>
            <person name="Konno H."/>
            <person name="Nakano K."/>
            <person name="Ninomiya N."/>
            <person name="Nishio T."/>
            <person name="Okada M."/>
            <person name="Plessy C."/>
            <person name="Shibata K."/>
            <person name="Shiraki T."/>
            <person name="Suzuki S."/>
            <person name="Tagami M."/>
            <person name="Waki K."/>
            <person name="Watahiki A."/>
            <person name="Okamura-Oho Y."/>
            <person name="Suzuki H."/>
            <person name="Kawai J."/>
            <person name="Hayashizaki Y."/>
        </authorList>
    </citation>
    <scope>NUCLEOTIDE SEQUENCE [LARGE SCALE MRNA]</scope>
    <source>
        <strain>C57BL/6J</strain>
        <tissue>Lung</tissue>
        <tissue>Mammary gland</tissue>
        <tissue>Pancreas</tissue>
        <tissue>Thymus</tissue>
    </source>
</reference>
<reference key="3">
    <citation type="journal article" date="2004" name="Genome Res.">
        <title>The status, quality, and expansion of the NIH full-length cDNA project: the Mammalian Gene Collection (MGC).</title>
        <authorList>
            <consortium name="The MGC Project Team"/>
        </authorList>
    </citation>
    <scope>NUCLEOTIDE SEQUENCE [LARGE SCALE MRNA]</scope>
    <source>
        <tissue>Colon</tissue>
        <tissue>Mammary tumor</tissue>
    </source>
</reference>
<reference key="4">
    <citation type="journal article" date="1994" name="J. Biol. Chem.">
        <title>Requiem: a novel zinc finger gene essential for apoptosis in myeloid cells.</title>
        <authorList>
            <person name="Gabig T.G."/>
            <person name="Mantel P.L."/>
            <person name="Rosli R."/>
            <person name="Crean C.D."/>
        </authorList>
    </citation>
    <scope>NUCLEOTIDE SEQUENCE [MRNA] OF 6-391</scope>
    <scope>FUNCTION</scope>
    <source>
        <strain>C57BL/6J</strain>
        <tissue>Spleen</tissue>
    </source>
</reference>
<reference key="5">
    <citation type="journal article" date="1998" name="Mamm. Genome">
        <title>Expression and chromosomal localization of the Requiem gene.</title>
        <authorList>
            <person name="Gabig T.G."/>
            <person name="Crean C.D."/>
            <person name="Klenk A."/>
            <person name="Long H."/>
            <person name="Copeland N.G."/>
            <person name="Gilbert D.J."/>
            <person name="Jenkins N.A."/>
            <person name="Quincey D."/>
            <person name="Parente F."/>
            <person name="Lespinasse F."/>
            <person name="Carle G.F."/>
            <person name="Gaudray P."/>
            <person name="Zhang C.X."/>
            <person name="Calender A."/>
            <person name="Hoeppener J."/>
            <person name="Kas K."/>
            <person name="Thakker R.V."/>
            <person name="Farnebo F."/>
            <person name="Teh B.T."/>
            <person name="Larsson C."/>
            <person name="Piehl F."/>
            <person name="Lagercrantz J."/>
            <person name="Khodaei S."/>
            <person name="Carson E."/>
            <person name="Weber G."/>
        </authorList>
    </citation>
    <scope>TISSUE SPECIFICITY</scope>
</reference>
<reference key="6">
    <citation type="journal article" date="2007" name="Neuron">
        <title>An essential switch in subunit composition of a chromatin remodeling complex during neural development.</title>
        <authorList>
            <person name="Lessard J."/>
            <person name="Wu J.I."/>
            <person name="Ranish J.A."/>
            <person name="Wan M."/>
            <person name="Winslow M.M."/>
            <person name="Staahl B.T."/>
            <person name="Wu H."/>
            <person name="Aebersold R."/>
            <person name="Graef I.A."/>
            <person name="Crabtree G.R."/>
        </authorList>
    </citation>
    <scope>IDENTIFICATION BY MASS SPECTROMETRY</scope>
    <scope>DEVELOPMENTAL STAGE</scope>
</reference>
<reference key="7">
    <citation type="journal article" date="2007" name="Proc. Natl. Acad. Sci. U.S.A.">
        <title>Large-scale phosphorylation analysis of mouse liver.</title>
        <authorList>
            <person name="Villen J."/>
            <person name="Beausoleil S.A."/>
            <person name="Gerber S.A."/>
            <person name="Gygi S.P."/>
        </authorList>
    </citation>
    <scope>PHOSPHORYLATION [LARGE SCALE ANALYSIS] AT SER-142</scope>
    <scope>IDENTIFICATION BY MASS SPECTROMETRY [LARGE SCALE ANALYSIS]</scope>
    <source>
        <tissue>Liver</tissue>
    </source>
</reference>
<reference key="8">
    <citation type="journal article" date="2009" name="Mol. Cell. Proteomics">
        <title>Large scale localization of protein phosphorylation by use of electron capture dissociation mass spectrometry.</title>
        <authorList>
            <person name="Sweet S.M."/>
            <person name="Bailey C.M."/>
            <person name="Cunningham D.L."/>
            <person name="Heath J.K."/>
            <person name="Cooper H.J."/>
        </authorList>
    </citation>
    <scope>IDENTIFICATION BY MASS SPECTROMETRY [LARGE SCALE ANALYSIS]</scope>
    <source>
        <tissue>Embryonic fibroblast</tissue>
    </source>
</reference>
<reference key="9">
    <citation type="journal article" date="2010" name="Cell">
        <title>A tissue-specific atlas of mouse protein phosphorylation and expression.</title>
        <authorList>
            <person name="Huttlin E.L."/>
            <person name="Jedrychowski M.P."/>
            <person name="Elias J.E."/>
            <person name="Goswami T."/>
            <person name="Rad R."/>
            <person name="Beausoleil S.A."/>
            <person name="Villen J."/>
            <person name="Haas W."/>
            <person name="Sowa M.E."/>
            <person name="Gygi S.P."/>
        </authorList>
    </citation>
    <scope>PHOSPHORYLATION [LARGE SCALE ANALYSIS] AT SER-142 AND THR-176</scope>
    <scope>IDENTIFICATION BY MASS SPECTROMETRY [LARGE SCALE ANALYSIS]</scope>
    <source>
        <tissue>Brain</tissue>
        <tissue>Brown adipose tissue</tissue>
        <tissue>Kidney</tissue>
        <tissue>Lung</tissue>
        <tissue>Pancreas</tissue>
        <tissue>Spleen</tissue>
        <tissue>Testis</tissue>
    </source>
</reference>